<evidence type="ECO:0000250" key="1">
    <source>
        <dbReference type="UniProtKB" id="Q6P499"/>
    </source>
</evidence>
<evidence type="ECO:0000255" key="2"/>
<evidence type="ECO:0000256" key="3">
    <source>
        <dbReference type="SAM" id="MobiDB-lite"/>
    </source>
</evidence>
<evidence type="ECO:0000305" key="4"/>
<keyword id="KW-0472">Membrane</keyword>
<keyword id="KW-0597">Phosphoprotein</keyword>
<keyword id="KW-1185">Reference proteome</keyword>
<keyword id="KW-0812">Transmembrane</keyword>
<keyword id="KW-1133">Transmembrane helix</keyword>
<feature type="chain" id="PRO_0000242151" description="NIPA-like protein 3">
    <location>
        <begin position="1"/>
        <end position="410"/>
    </location>
</feature>
<feature type="transmembrane region" description="Helical" evidence="2">
    <location>
        <begin position="37"/>
        <end position="57"/>
    </location>
</feature>
<feature type="transmembrane region" description="Helical" evidence="2">
    <location>
        <begin position="80"/>
        <end position="100"/>
    </location>
</feature>
<feature type="transmembrane region" description="Helical" evidence="2">
    <location>
        <begin position="105"/>
        <end position="125"/>
    </location>
</feature>
<feature type="transmembrane region" description="Helical" evidence="2">
    <location>
        <begin position="139"/>
        <end position="159"/>
    </location>
</feature>
<feature type="transmembrane region" description="Helical" evidence="2">
    <location>
        <begin position="175"/>
        <end position="195"/>
    </location>
</feature>
<feature type="transmembrane region" description="Helical" evidence="2">
    <location>
        <begin position="206"/>
        <end position="226"/>
    </location>
</feature>
<feature type="transmembrane region" description="Helical" evidence="2">
    <location>
        <begin position="244"/>
        <end position="264"/>
    </location>
</feature>
<feature type="transmembrane region" description="Helical" evidence="2">
    <location>
        <begin position="275"/>
        <end position="295"/>
    </location>
</feature>
<feature type="transmembrane region" description="Helical" evidence="2">
    <location>
        <begin position="304"/>
        <end position="324"/>
    </location>
</feature>
<feature type="region of interest" description="Disordered" evidence="3">
    <location>
        <begin position="1"/>
        <end position="24"/>
    </location>
</feature>
<feature type="region of interest" description="Disordered" evidence="3">
    <location>
        <begin position="389"/>
        <end position="410"/>
    </location>
</feature>
<feature type="modified residue" description="Phosphoserine" evidence="1">
    <location>
        <position position="376"/>
    </location>
</feature>
<feature type="sequence conflict" description="In Ref. 2; AAH57168." evidence="4" ref="2">
    <original>L</original>
    <variation>P</variation>
    <location>
        <position position="55"/>
    </location>
</feature>
<feature type="sequence conflict" description="In Ref. 1; BAB31323." evidence="4" ref="1">
    <original>R</original>
    <variation>G</variation>
    <location>
        <position position="136"/>
    </location>
</feature>
<feature type="sequence conflict" description="In Ref. 1; BAB31323." evidence="4" ref="1">
    <original>V</original>
    <variation>M</variation>
    <location>
        <position position="227"/>
    </location>
</feature>
<protein>
    <recommendedName>
        <fullName>NIPA-like protein 3</fullName>
    </recommendedName>
</protein>
<sequence length="410" mass="44808">MDGAHSAGLQLQPLPPTSGATSTSLSSSEGSFSYKENLIGALLAIFGHLVVSIALNLQKYCHIRLAGSKDPRAYFKTKTWWLGLLLLLLGELGVFASYAFAPLSLIVPLSAVSVIASAIIGIIFIKEKWKPKDFVRRYVLSFVGCGLAIVGTYLLVTFAPNSHEKMTGENIARHLVSWPFLLYMLVAIVLFCLLLYFYKERNANSIVVILLLVALLGSMTVVTVKAVSGMLVLSIQGNLQLDYPIFYVMFVCMVATAIYQATFLSEASQIYDSSLIASVGYILSTTAAITAGAIFYLDFLGEEALHICMFALGCLIAFLGVFLITRNRKKAIPFEPYISMDAMPGMQDMHAKGTTVQPDLKASFSYGALESNDSISELYTPATLPVMQEEHSSRSTPGVPYRVLEHTKKE</sequence>
<gene>
    <name type="primary">Nipal3</name>
    <name type="synonym">Npal3</name>
</gene>
<accession>Q8BGN5</accession>
<accession>Q6PG85</accession>
<accession>Q9D2Y2</accession>
<reference key="1">
    <citation type="journal article" date="2005" name="Science">
        <title>The transcriptional landscape of the mammalian genome.</title>
        <authorList>
            <person name="Carninci P."/>
            <person name="Kasukawa T."/>
            <person name="Katayama S."/>
            <person name="Gough J."/>
            <person name="Frith M.C."/>
            <person name="Maeda N."/>
            <person name="Oyama R."/>
            <person name="Ravasi T."/>
            <person name="Lenhard B."/>
            <person name="Wells C."/>
            <person name="Kodzius R."/>
            <person name="Shimokawa K."/>
            <person name="Bajic V.B."/>
            <person name="Brenner S.E."/>
            <person name="Batalov S."/>
            <person name="Forrest A.R."/>
            <person name="Zavolan M."/>
            <person name="Davis M.J."/>
            <person name="Wilming L.G."/>
            <person name="Aidinis V."/>
            <person name="Allen J.E."/>
            <person name="Ambesi-Impiombato A."/>
            <person name="Apweiler R."/>
            <person name="Aturaliya R.N."/>
            <person name="Bailey T.L."/>
            <person name="Bansal M."/>
            <person name="Baxter L."/>
            <person name="Beisel K.W."/>
            <person name="Bersano T."/>
            <person name="Bono H."/>
            <person name="Chalk A.M."/>
            <person name="Chiu K.P."/>
            <person name="Choudhary V."/>
            <person name="Christoffels A."/>
            <person name="Clutterbuck D.R."/>
            <person name="Crowe M.L."/>
            <person name="Dalla E."/>
            <person name="Dalrymple B.P."/>
            <person name="de Bono B."/>
            <person name="Della Gatta G."/>
            <person name="di Bernardo D."/>
            <person name="Down T."/>
            <person name="Engstrom P."/>
            <person name="Fagiolini M."/>
            <person name="Faulkner G."/>
            <person name="Fletcher C.F."/>
            <person name="Fukushima T."/>
            <person name="Furuno M."/>
            <person name="Futaki S."/>
            <person name="Gariboldi M."/>
            <person name="Georgii-Hemming P."/>
            <person name="Gingeras T.R."/>
            <person name="Gojobori T."/>
            <person name="Green R.E."/>
            <person name="Gustincich S."/>
            <person name="Harbers M."/>
            <person name="Hayashi Y."/>
            <person name="Hensch T.K."/>
            <person name="Hirokawa N."/>
            <person name="Hill D."/>
            <person name="Huminiecki L."/>
            <person name="Iacono M."/>
            <person name="Ikeo K."/>
            <person name="Iwama A."/>
            <person name="Ishikawa T."/>
            <person name="Jakt M."/>
            <person name="Kanapin A."/>
            <person name="Katoh M."/>
            <person name="Kawasawa Y."/>
            <person name="Kelso J."/>
            <person name="Kitamura H."/>
            <person name="Kitano H."/>
            <person name="Kollias G."/>
            <person name="Krishnan S.P."/>
            <person name="Kruger A."/>
            <person name="Kummerfeld S.K."/>
            <person name="Kurochkin I.V."/>
            <person name="Lareau L.F."/>
            <person name="Lazarevic D."/>
            <person name="Lipovich L."/>
            <person name="Liu J."/>
            <person name="Liuni S."/>
            <person name="McWilliam S."/>
            <person name="Madan Babu M."/>
            <person name="Madera M."/>
            <person name="Marchionni L."/>
            <person name="Matsuda H."/>
            <person name="Matsuzawa S."/>
            <person name="Miki H."/>
            <person name="Mignone F."/>
            <person name="Miyake S."/>
            <person name="Morris K."/>
            <person name="Mottagui-Tabar S."/>
            <person name="Mulder N."/>
            <person name="Nakano N."/>
            <person name="Nakauchi H."/>
            <person name="Ng P."/>
            <person name="Nilsson R."/>
            <person name="Nishiguchi S."/>
            <person name="Nishikawa S."/>
            <person name="Nori F."/>
            <person name="Ohara O."/>
            <person name="Okazaki Y."/>
            <person name="Orlando V."/>
            <person name="Pang K.C."/>
            <person name="Pavan W.J."/>
            <person name="Pavesi G."/>
            <person name="Pesole G."/>
            <person name="Petrovsky N."/>
            <person name="Piazza S."/>
            <person name="Reed J."/>
            <person name="Reid J.F."/>
            <person name="Ring B.Z."/>
            <person name="Ringwald M."/>
            <person name="Rost B."/>
            <person name="Ruan Y."/>
            <person name="Salzberg S.L."/>
            <person name="Sandelin A."/>
            <person name="Schneider C."/>
            <person name="Schoenbach C."/>
            <person name="Sekiguchi K."/>
            <person name="Semple C.A."/>
            <person name="Seno S."/>
            <person name="Sessa L."/>
            <person name="Sheng Y."/>
            <person name="Shibata Y."/>
            <person name="Shimada H."/>
            <person name="Shimada K."/>
            <person name="Silva D."/>
            <person name="Sinclair B."/>
            <person name="Sperling S."/>
            <person name="Stupka E."/>
            <person name="Sugiura K."/>
            <person name="Sultana R."/>
            <person name="Takenaka Y."/>
            <person name="Taki K."/>
            <person name="Tammoja K."/>
            <person name="Tan S.L."/>
            <person name="Tang S."/>
            <person name="Taylor M.S."/>
            <person name="Tegner J."/>
            <person name="Teichmann S.A."/>
            <person name="Ueda H.R."/>
            <person name="van Nimwegen E."/>
            <person name="Verardo R."/>
            <person name="Wei C.L."/>
            <person name="Yagi K."/>
            <person name="Yamanishi H."/>
            <person name="Zabarovsky E."/>
            <person name="Zhu S."/>
            <person name="Zimmer A."/>
            <person name="Hide W."/>
            <person name="Bult C."/>
            <person name="Grimmond S.M."/>
            <person name="Teasdale R.D."/>
            <person name="Liu E.T."/>
            <person name="Brusic V."/>
            <person name="Quackenbush J."/>
            <person name="Wahlestedt C."/>
            <person name="Mattick J.S."/>
            <person name="Hume D.A."/>
            <person name="Kai C."/>
            <person name="Sasaki D."/>
            <person name="Tomaru Y."/>
            <person name="Fukuda S."/>
            <person name="Kanamori-Katayama M."/>
            <person name="Suzuki M."/>
            <person name="Aoki J."/>
            <person name="Arakawa T."/>
            <person name="Iida J."/>
            <person name="Imamura K."/>
            <person name="Itoh M."/>
            <person name="Kato T."/>
            <person name="Kawaji H."/>
            <person name="Kawagashira N."/>
            <person name="Kawashima T."/>
            <person name="Kojima M."/>
            <person name="Kondo S."/>
            <person name="Konno H."/>
            <person name="Nakano K."/>
            <person name="Ninomiya N."/>
            <person name="Nishio T."/>
            <person name="Okada M."/>
            <person name="Plessy C."/>
            <person name="Shibata K."/>
            <person name="Shiraki T."/>
            <person name="Suzuki S."/>
            <person name="Tagami M."/>
            <person name="Waki K."/>
            <person name="Watahiki A."/>
            <person name="Okamura-Oho Y."/>
            <person name="Suzuki H."/>
            <person name="Kawai J."/>
            <person name="Hayashizaki Y."/>
        </authorList>
    </citation>
    <scope>NUCLEOTIDE SEQUENCE [LARGE SCALE MRNA]</scope>
    <source>
        <strain>C57BL/6J</strain>
        <tissue>Cecum</tissue>
        <tissue>Ovary</tissue>
        <tissue>Spinal cord</tissue>
        <tissue>Thymus</tissue>
    </source>
</reference>
<reference key="2">
    <citation type="journal article" date="2004" name="Genome Res.">
        <title>The status, quality, and expansion of the NIH full-length cDNA project: the Mammalian Gene Collection (MGC).</title>
        <authorList>
            <consortium name="The MGC Project Team"/>
        </authorList>
    </citation>
    <scope>NUCLEOTIDE SEQUENCE [LARGE SCALE MRNA]</scope>
    <source>
        <strain>FVB/N</strain>
        <tissue>Kidney</tissue>
    </source>
</reference>
<dbReference type="EMBL" id="BC057168">
    <property type="protein sequence ID" value="AAH57168.1"/>
    <property type="molecule type" value="mRNA"/>
</dbReference>
<dbReference type="EMBL" id="AK018640">
    <property type="protein sequence ID" value="BAB31323.1"/>
    <property type="status" value="ALT_SEQ"/>
    <property type="molecule type" value="mRNA"/>
</dbReference>
<dbReference type="EMBL" id="AK049696">
    <property type="protein sequence ID" value="BAC33879.1"/>
    <property type="molecule type" value="mRNA"/>
</dbReference>
<dbReference type="EMBL" id="AK087811">
    <property type="protein sequence ID" value="BAC40011.1"/>
    <property type="molecule type" value="mRNA"/>
</dbReference>
<dbReference type="EMBL" id="AK138843">
    <property type="protein sequence ID" value="BAE23796.1"/>
    <property type="molecule type" value="mRNA"/>
</dbReference>
<dbReference type="CCDS" id="CCDS18786.1"/>
<dbReference type="RefSeq" id="NP_001348413.1">
    <property type="nucleotide sequence ID" value="NM_001361484.1"/>
</dbReference>
<dbReference type="RefSeq" id="NP_083271.1">
    <property type="nucleotide sequence ID" value="NM_028995.4"/>
</dbReference>
<dbReference type="RefSeq" id="XP_017175906.1">
    <property type="nucleotide sequence ID" value="XM_017320417.1"/>
</dbReference>
<dbReference type="FunCoup" id="Q8BGN5">
    <property type="interactions" value="209"/>
</dbReference>
<dbReference type="STRING" id="10090.ENSMUSP00000101482"/>
<dbReference type="GlyGen" id="Q8BGN5">
    <property type="glycosylation" value="1 site"/>
</dbReference>
<dbReference type="PhosphoSitePlus" id="Q8BGN5"/>
<dbReference type="SwissPalm" id="Q8BGN5"/>
<dbReference type="PaxDb" id="10090-ENSMUSP00000099608"/>
<dbReference type="PeptideAtlas" id="Q8BGN5"/>
<dbReference type="ProteomicsDB" id="253002"/>
<dbReference type="Antibodypedia" id="30307">
    <property type="antibodies" value="94 antibodies from 13 providers"/>
</dbReference>
<dbReference type="Ensembl" id="ENSMUST00000102549.10">
    <property type="protein sequence ID" value="ENSMUSP00000099608.4"/>
    <property type="gene ID" value="ENSMUSG00000028803.19"/>
</dbReference>
<dbReference type="GeneID" id="74552"/>
<dbReference type="KEGG" id="mmu:74552"/>
<dbReference type="UCSC" id="uc008vgo.1">
    <property type="organism name" value="mouse"/>
</dbReference>
<dbReference type="AGR" id="MGI:1921802"/>
<dbReference type="CTD" id="57185"/>
<dbReference type="MGI" id="MGI:1921802">
    <property type="gene designation" value="Nipal3"/>
</dbReference>
<dbReference type="VEuPathDB" id="HostDB:ENSMUSG00000028803"/>
<dbReference type="eggNOG" id="KOG2922">
    <property type="taxonomic scope" value="Eukaryota"/>
</dbReference>
<dbReference type="GeneTree" id="ENSGT00940000158233"/>
<dbReference type="HOGENOM" id="CLU_012349_2_0_1"/>
<dbReference type="InParanoid" id="Q8BGN5"/>
<dbReference type="OMA" id="PYVTMDV"/>
<dbReference type="OrthoDB" id="165382at2759"/>
<dbReference type="TreeFam" id="TF313214"/>
<dbReference type="Reactome" id="R-MMU-5223345">
    <property type="pathway name" value="Miscellaneous transport and binding events"/>
</dbReference>
<dbReference type="BioGRID-ORCS" id="74552">
    <property type="hits" value="2 hits in 76 CRISPR screens"/>
</dbReference>
<dbReference type="ChiTaRS" id="Nipal3">
    <property type="organism name" value="mouse"/>
</dbReference>
<dbReference type="PRO" id="PR:Q8BGN5"/>
<dbReference type="Proteomes" id="UP000000589">
    <property type="component" value="Chromosome 4"/>
</dbReference>
<dbReference type="RNAct" id="Q8BGN5">
    <property type="molecule type" value="protein"/>
</dbReference>
<dbReference type="Bgee" id="ENSMUSG00000028803">
    <property type="expression patterns" value="Expressed in otolith organ and 210 other cell types or tissues"/>
</dbReference>
<dbReference type="ExpressionAtlas" id="Q8BGN5">
    <property type="expression patterns" value="baseline and differential"/>
</dbReference>
<dbReference type="GO" id="GO:0016020">
    <property type="term" value="C:membrane"/>
    <property type="evidence" value="ECO:0007669"/>
    <property type="project" value="UniProtKB-SubCell"/>
</dbReference>
<dbReference type="GO" id="GO:0015095">
    <property type="term" value="F:magnesium ion transmembrane transporter activity"/>
    <property type="evidence" value="ECO:0007669"/>
    <property type="project" value="InterPro"/>
</dbReference>
<dbReference type="InterPro" id="IPR008521">
    <property type="entry name" value="Mg_trans_NIPA"/>
</dbReference>
<dbReference type="PANTHER" id="PTHR12570">
    <property type="match status" value="1"/>
</dbReference>
<dbReference type="PANTHER" id="PTHR12570:SF14">
    <property type="entry name" value="NIPA-LIKE PROTEIN 3"/>
    <property type="match status" value="1"/>
</dbReference>
<dbReference type="Pfam" id="PF05653">
    <property type="entry name" value="Mg_trans_NIPA"/>
    <property type="match status" value="1"/>
</dbReference>
<comment type="subcellular location">
    <subcellularLocation>
        <location evidence="4">Membrane</location>
        <topology evidence="4">Multi-pass membrane protein</topology>
    </subcellularLocation>
</comment>
<comment type="similarity">
    <text evidence="4">Belongs to the NIPA family.</text>
</comment>
<comment type="sequence caution" evidence="4">
    <conflict type="erroneous termination">
        <sequence resource="EMBL-CDS" id="BAB31323"/>
    </conflict>
    <text>Truncated C-terminus.</text>
</comment>
<name>NPAL3_MOUSE</name>
<organism>
    <name type="scientific">Mus musculus</name>
    <name type="common">Mouse</name>
    <dbReference type="NCBI Taxonomy" id="10090"/>
    <lineage>
        <taxon>Eukaryota</taxon>
        <taxon>Metazoa</taxon>
        <taxon>Chordata</taxon>
        <taxon>Craniata</taxon>
        <taxon>Vertebrata</taxon>
        <taxon>Euteleostomi</taxon>
        <taxon>Mammalia</taxon>
        <taxon>Eutheria</taxon>
        <taxon>Euarchontoglires</taxon>
        <taxon>Glires</taxon>
        <taxon>Rodentia</taxon>
        <taxon>Myomorpha</taxon>
        <taxon>Muroidea</taxon>
        <taxon>Muridae</taxon>
        <taxon>Murinae</taxon>
        <taxon>Mus</taxon>
        <taxon>Mus</taxon>
    </lineage>
</organism>
<proteinExistence type="evidence at transcript level"/>